<protein>
    <recommendedName>
        <fullName evidence="1">Ketol-acid reductoisomerase (NADP(+))</fullName>
        <shortName evidence="1">KARI</shortName>
        <ecNumber evidence="1">1.1.1.86</ecNumber>
    </recommendedName>
    <alternativeName>
        <fullName evidence="1">Acetohydroxy-acid isomeroreductase</fullName>
        <shortName evidence="1">AHIR</shortName>
    </alternativeName>
    <alternativeName>
        <fullName evidence="1">Alpha-keto-beta-hydroxylacyl reductoisomerase</fullName>
    </alternativeName>
    <alternativeName>
        <fullName evidence="1">Ketol-acid reductoisomerase type 1</fullName>
    </alternativeName>
    <alternativeName>
        <fullName evidence="1">Ketol-acid reductoisomerase type I</fullName>
    </alternativeName>
</protein>
<gene>
    <name evidence="1" type="primary">ilvC</name>
    <name type="ordered locus">BOV_1337</name>
</gene>
<accession>A5VRC9</accession>
<keyword id="KW-0028">Amino-acid biosynthesis</keyword>
<keyword id="KW-0100">Branched-chain amino acid biosynthesis</keyword>
<keyword id="KW-0460">Magnesium</keyword>
<keyword id="KW-0479">Metal-binding</keyword>
<keyword id="KW-0521">NADP</keyword>
<keyword id="KW-0560">Oxidoreductase</keyword>
<organism>
    <name type="scientific">Brucella ovis (strain ATCC 25840 / 63/290 / NCTC 10512)</name>
    <dbReference type="NCBI Taxonomy" id="444178"/>
    <lineage>
        <taxon>Bacteria</taxon>
        <taxon>Pseudomonadati</taxon>
        <taxon>Pseudomonadota</taxon>
        <taxon>Alphaproteobacteria</taxon>
        <taxon>Hyphomicrobiales</taxon>
        <taxon>Brucellaceae</taxon>
        <taxon>Brucella/Ochrobactrum group</taxon>
        <taxon>Brucella</taxon>
    </lineage>
</organism>
<comment type="function">
    <text evidence="1">Involved in the biosynthesis of branched-chain amino acids (BCAA). Catalyzes an alkyl-migration followed by a ketol-acid reduction of (S)-2-acetolactate (S2AL) to yield (R)-2,3-dihydroxy-isovalerate. In the isomerase reaction, S2AL is rearranged via a Mg-dependent methyl migration to produce 3-hydroxy-3-methyl-2-ketobutyrate (HMKB). In the reductase reaction, this 2-ketoacid undergoes a metal-dependent reduction by NADPH to yield (R)-2,3-dihydroxy-isovalerate.</text>
</comment>
<comment type="catalytic activity">
    <reaction evidence="1">
        <text>(2R)-2,3-dihydroxy-3-methylbutanoate + NADP(+) = (2S)-2-acetolactate + NADPH + H(+)</text>
        <dbReference type="Rhea" id="RHEA:22068"/>
        <dbReference type="ChEBI" id="CHEBI:15378"/>
        <dbReference type="ChEBI" id="CHEBI:49072"/>
        <dbReference type="ChEBI" id="CHEBI:57783"/>
        <dbReference type="ChEBI" id="CHEBI:58349"/>
        <dbReference type="ChEBI" id="CHEBI:58476"/>
        <dbReference type="EC" id="1.1.1.86"/>
    </reaction>
</comment>
<comment type="catalytic activity">
    <reaction evidence="1">
        <text>(2R,3R)-2,3-dihydroxy-3-methylpentanoate + NADP(+) = (S)-2-ethyl-2-hydroxy-3-oxobutanoate + NADPH + H(+)</text>
        <dbReference type="Rhea" id="RHEA:13493"/>
        <dbReference type="ChEBI" id="CHEBI:15378"/>
        <dbReference type="ChEBI" id="CHEBI:49256"/>
        <dbReference type="ChEBI" id="CHEBI:49258"/>
        <dbReference type="ChEBI" id="CHEBI:57783"/>
        <dbReference type="ChEBI" id="CHEBI:58349"/>
        <dbReference type="EC" id="1.1.1.86"/>
    </reaction>
</comment>
<comment type="cofactor">
    <cofactor evidence="1">
        <name>Mg(2+)</name>
        <dbReference type="ChEBI" id="CHEBI:18420"/>
    </cofactor>
    <text evidence="1">Binds 2 magnesium ions per subunit.</text>
</comment>
<comment type="pathway">
    <text evidence="1">Amino-acid biosynthesis; L-isoleucine biosynthesis; L-isoleucine from 2-oxobutanoate: step 2/4.</text>
</comment>
<comment type="pathway">
    <text evidence="1">Amino-acid biosynthesis; L-valine biosynthesis; L-valine from pyruvate: step 2/4.</text>
</comment>
<comment type="similarity">
    <text evidence="1">Belongs to the ketol-acid reductoisomerase family.</text>
</comment>
<name>ILVC_BRUO2</name>
<evidence type="ECO:0000255" key="1">
    <source>
        <dbReference type="HAMAP-Rule" id="MF_00435"/>
    </source>
</evidence>
<evidence type="ECO:0000255" key="2">
    <source>
        <dbReference type="PROSITE-ProRule" id="PRU01197"/>
    </source>
</evidence>
<evidence type="ECO:0000255" key="3">
    <source>
        <dbReference type="PROSITE-ProRule" id="PRU01198"/>
    </source>
</evidence>
<sequence>MRVYYDRDADVNLIKSKKVVIVGYGSQGRAHALNLKDSGAANVRVALREGSATVQKAQADGFEVMNVADAAKWADLMMMATPDELQADIYRDHIHNNLRDGAAIAFAHGLNVHFGLIEPKKTVDVVMIAPKGPGHTVRGEYQKGGGVPCLIAIHQDASGNAHDLALSYASGVGGGRSGVIETTFKEECETDLFGEQAVLCGGVVELIRTGFEVLVEAGYAPEMAYFECLNEMKLIVDLIYEGGIANMNYSISNTAEWGEYVTGPRIITAETKAEMKRVLKDIQTGKFTSDWMQEWKAGAARFKGIRRLNDAHQIEEVGGKLRAMMPWIEKNKLVDKARN</sequence>
<feature type="chain" id="PRO_1000050483" description="Ketol-acid reductoisomerase (NADP(+))">
    <location>
        <begin position="1"/>
        <end position="339"/>
    </location>
</feature>
<feature type="domain" description="KARI N-terminal Rossmann" evidence="2">
    <location>
        <begin position="1"/>
        <end position="182"/>
    </location>
</feature>
<feature type="domain" description="KARI C-terminal knotted" evidence="3">
    <location>
        <begin position="183"/>
        <end position="328"/>
    </location>
</feature>
<feature type="active site" evidence="1">
    <location>
        <position position="108"/>
    </location>
</feature>
<feature type="binding site" evidence="1">
    <location>
        <begin position="24"/>
        <end position="27"/>
    </location>
    <ligand>
        <name>NADP(+)</name>
        <dbReference type="ChEBI" id="CHEBI:58349"/>
    </ligand>
</feature>
<feature type="binding site" evidence="1">
    <location>
        <position position="48"/>
    </location>
    <ligand>
        <name>NADP(+)</name>
        <dbReference type="ChEBI" id="CHEBI:58349"/>
    </ligand>
</feature>
<feature type="binding site" evidence="1">
    <location>
        <position position="51"/>
    </location>
    <ligand>
        <name>NADP(+)</name>
        <dbReference type="ChEBI" id="CHEBI:58349"/>
    </ligand>
</feature>
<feature type="binding site" evidence="1">
    <location>
        <position position="53"/>
    </location>
    <ligand>
        <name>NADP(+)</name>
        <dbReference type="ChEBI" id="CHEBI:58349"/>
    </ligand>
</feature>
<feature type="binding site" evidence="1">
    <location>
        <begin position="83"/>
        <end position="86"/>
    </location>
    <ligand>
        <name>NADP(+)</name>
        <dbReference type="ChEBI" id="CHEBI:58349"/>
    </ligand>
</feature>
<feature type="binding site" evidence="1">
    <location>
        <position position="134"/>
    </location>
    <ligand>
        <name>NADP(+)</name>
        <dbReference type="ChEBI" id="CHEBI:58349"/>
    </ligand>
</feature>
<feature type="binding site" evidence="1">
    <location>
        <position position="191"/>
    </location>
    <ligand>
        <name>Mg(2+)</name>
        <dbReference type="ChEBI" id="CHEBI:18420"/>
        <label>1</label>
    </ligand>
</feature>
<feature type="binding site" evidence="1">
    <location>
        <position position="191"/>
    </location>
    <ligand>
        <name>Mg(2+)</name>
        <dbReference type="ChEBI" id="CHEBI:18420"/>
        <label>2</label>
    </ligand>
</feature>
<feature type="binding site" evidence="1">
    <location>
        <position position="195"/>
    </location>
    <ligand>
        <name>Mg(2+)</name>
        <dbReference type="ChEBI" id="CHEBI:18420"/>
        <label>1</label>
    </ligand>
</feature>
<feature type="binding site" evidence="1">
    <location>
        <position position="227"/>
    </location>
    <ligand>
        <name>Mg(2+)</name>
        <dbReference type="ChEBI" id="CHEBI:18420"/>
        <label>2</label>
    </ligand>
</feature>
<feature type="binding site" evidence="1">
    <location>
        <position position="231"/>
    </location>
    <ligand>
        <name>Mg(2+)</name>
        <dbReference type="ChEBI" id="CHEBI:18420"/>
        <label>2</label>
    </ligand>
</feature>
<feature type="binding site" evidence="1">
    <location>
        <position position="252"/>
    </location>
    <ligand>
        <name>substrate</name>
    </ligand>
</feature>
<dbReference type="EC" id="1.1.1.86" evidence="1"/>
<dbReference type="EMBL" id="CP000708">
    <property type="protein sequence ID" value="ABQ61280.1"/>
    <property type="molecule type" value="Genomic_DNA"/>
</dbReference>
<dbReference type="RefSeq" id="WP_004688531.1">
    <property type="nucleotide sequence ID" value="NC_009505.1"/>
</dbReference>
<dbReference type="SMR" id="A5VRC9"/>
<dbReference type="GeneID" id="97533405"/>
<dbReference type="KEGG" id="bov:BOV_1337"/>
<dbReference type="HOGENOM" id="CLU_033821_0_1_5"/>
<dbReference type="PhylomeDB" id="A5VRC9"/>
<dbReference type="UniPathway" id="UPA00047">
    <property type="reaction ID" value="UER00056"/>
</dbReference>
<dbReference type="UniPathway" id="UPA00049">
    <property type="reaction ID" value="UER00060"/>
</dbReference>
<dbReference type="PRO" id="PR:A5VRC9"/>
<dbReference type="Proteomes" id="UP000006383">
    <property type="component" value="Chromosome I"/>
</dbReference>
<dbReference type="GO" id="GO:0005829">
    <property type="term" value="C:cytosol"/>
    <property type="evidence" value="ECO:0007669"/>
    <property type="project" value="TreeGrafter"/>
</dbReference>
<dbReference type="GO" id="GO:0004455">
    <property type="term" value="F:ketol-acid reductoisomerase activity"/>
    <property type="evidence" value="ECO:0007669"/>
    <property type="project" value="UniProtKB-UniRule"/>
</dbReference>
<dbReference type="GO" id="GO:0000287">
    <property type="term" value="F:magnesium ion binding"/>
    <property type="evidence" value="ECO:0007669"/>
    <property type="project" value="UniProtKB-UniRule"/>
</dbReference>
<dbReference type="GO" id="GO:0050661">
    <property type="term" value="F:NADP binding"/>
    <property type="evidence" value="ECO:0007669"/>
    <property type="project" value="InterPro"/>
</dbReference>
<dbReference type="GO" id="GO:0009097">
    <property type="term" value="P:isoleucine biosynthetic process"/>
    <property type="evidence" value="ECO:0007669"/>
    <property type="project" value="UniProtKB-UniRule"/>
</dbReference>
<dbReference type="GO" id="GO:0009099">
    <property type="term" value="P:L-valine biosynthetic process"/>
    <property type="evidence" value="ECO:0007669"/>
    <property type="project" value="UniProtKB-UniRule"/>
</dbReference>
<dbReference type="FunFam" id="3.40.50.720:FF:000023">
    <property type="entry name" value="Ketol-acid reductoisomerase (NADP(+))"/>
    <property type="match status" value="1"/>
</dbReference>
<dbReference type="Gene3D" id="6.10.240.10">
    <property type="match status" value="1"/>
</dbReference>
<dbReference type="Gene3D" id="3.40.50.720">
    <property type="entry name" value="NAD(P)-binding Rossmann-like Domain"/>
    <property type="match status" value="1"/>
</dbReference>
<dbReference type="HAMAP" id="MF_00435">
    <property type="entry name" value="IlvC"/>
    <property type="match status" value="1"/>
</dbReference>
<dbReference type="InterPro" id="IPR008927">
    <property type="entry name" value="6-PGluconate_DH-like_C_sf"/>
</dbReference>
<dbReference type="InterPro" id="IPR013023">
    <property type="entry name" value="KARI"/>
</dbReference>
<dbReference type="InterPro" id="IPR000506">
    <property type="entry name" value="KARI_C"/>
</dbReference>
<dbReference type="InterPro" id="IPR013116">
    <property type="entry name" value="KARI_N"/>
</dbReference>
<dbReference type="InterPro" id="IPR014359">
    <property type="entry name" value="KARI_prok"/>
</dbReference>
<dbReference type="InterPro" id="IPR036291">
    <property type="entry name" value="NAD(P)-bd_dom_sf"/>
</dbReference>
<dbReference type="NCBIfam" id="TIGR00465">
    <property type="entry name" value="ilvC"/>
    <property type="match status" value="1"/>
</dbReference>
<dbReference type="NCBIfam" id="NF004017">
    <property type="entry name" value="PRK05479.1"/>
    <property type="match status" value="1"/>
</dbReference>
<dbReference type="NCBIfam" id="NF009940">
    <property type="entry name" value="PRK13403.1"/>
    <property type="match status" value="1"/>
</dbReference>
<dbReference type="PANTHER" id="PTHR21371">
    <property type="entry name" value="KETOL-ACID REDUCTOISOMERASE, MITOCHONDRIAL"/>
    <property type="match status" value="1"/>
</dbReference>
<dbReference type="PANTHER" id="PTHR21371:SF1">
    <property type="entry name" value="KETOL-ACID REDUCTOISOMERASE, MITOCHONDRIAL"/>
    <property type="match status" value="1"/>
</dbReference>
<dbReference type="Pfam" id="PF01450">
    <property type="entry name" value="KARI_C"/>
    <property type="match status" value="1"/>
</dbReference>
<dbReference type="Pfam" id="PF07991">
    <property type="entry name" value="KARI_N"/>
    <property type="match status" value="1"/>
</dbReference>
<dbReference type="PIRSF" id="PIRSF000116">
    <property type="entry name" value="IlvC_gammaproteo"/>
    <property type="match status" value="1"/>
</dbReference>
<dbReference type="SUPFAM" id="SSF48179">
    <property type="entry name" value="6-phosphogluconate dehydrogenase C-terminal domain-like"/>
    <property type="match status" value="1"/>
</dbReference>
<dbReference type="SUPFAM" id="SSF51735">
    <property type="entry name" value="NAD(P)-binding Rossmann-fold domains"/>
    <property type="match status" value="1"/>
</dbReference>
<dbReference type="PROSITE" id="PS51851">
    <property type="entry name" value="KARI_C"/>
    <property type="match status" value="1"/>
</dbReference>
<dbReference type="PROSITE" id="PS51850">
    <property type="entry name" value="KARI_N"/>
    <property type="match status" value="1"/>
</dbReference>
<reference key="1">
    <citation type="journal article" date="2009" name="PLoS ONE">
        <title>Genome degradation in Brucella ovis corresponds with narrowing of its host range and tissue tropism.</title>
        <authorList>
            <person name="Tsolis R.M."/>
            <person name="Seshadri R."/>
            <person name="Santos R.L."/>
            <person name="Sangari F.J."/>
            <person name="Lobo J.M."/>
            <person name="de Jong M.F."/>
            <person name="Ren Q."/>
            <person name="Myers G."/>
            <person name="Brinkac L.M."/>
            <person name="Nelson W.C."/>
            <person name="Deboy R.T."/>
            <person name="Angiuoli S."/>
            <person name="Khouri H."/>
            <person name="Dimitrov G."/>
            <person name="Robinson J.R."/>
            <person name="Mulligan S."/>
            <person name="Walker R.L."/>
            <person name="Elzer P.E."/>
            <person name="Hassan K.A."/>
            <person name="Paulsen I.T."/>
        </authorList>
    </citation>
    <scope>NUCLEOTIDE SEQUENCE [LARGE SCALE GENOMIC DNA]</scope>
    <source>
        <strain>ATCC 25840 / 63/290 / NCTC 10512</strain>
    </source>
</reference>
<proteinExistence type="inferred from homology"/>